<sequence>MAASSEILPESWQVFINFRGADLRNGFISHLAGALTSAGITYYIDTEEVPSEDLTVLFKRIEESEIALSIFSSNYAESKWCLDELVKIMEQVKKGKLRIMPVFFNVKPEEVREQNGEFGLKLYGEGKSKRPNIPNWENALRSVPSKIGLNLANFRNEKELLDKIIDSIKKVLARITRASRVAESLNGISKDSEAKNVDTFSPNSSDFPSTSIDDDLSINSPQYQATIPPASREGERLNTISTVSSTGSIEHPPPNYGIEPRLKEMEEKLDFDSLETKTVGIVGMPGIGKTTLAETLYRKWEHKFERSMFFPDASKMANEHGMCWLQKRLLEELLKDTNLNIGYTTNEHEFCKDVLLLKKVFLVIDNVSSEEQIETLFGKWNWIKNGSKIVITSSDESMLKGFVKDTYVVPSLNSRDSLLWFTNHAFGLDDAQGNLVKLSKHFLNYAKGNPLALGAFGVELCGKDKADWEKRIKTLTLISNKMIQDVLRRRYDELTERQKDIFLDVACFFKSENESYVRHVVNSCDSESTKSWDEITDLKGKFLVNISGGRVEMHDILCTFAKELASQALTEDTRVHLRLWNYQDIMWFLNNELEMENVRGIFLDMSKVPEEMTFDGNIFSNMCNLRYLKIYSSVCHKEGEGIFKFDTVREIQLPLDKVRYLHWMKYPWEKLPSDFNPENLVDLELPYSSIKKVWEGVKDTPILKWANLSYSSKLTNLLGLSNAKNLERLNLEGCTSLLKLPQEMENMKSLVFLNMRRCTSLTCLQSIKVSSLKILILSDCSKLEEFEVISENLEELYLDGTAIKGLPPAAGDLTRLVVLNMEGCTELESLPKRLGKQKALQELVLSGCSKLESVPTDVKDMKHLRLLLLDGTRIRKIPKIKSLKCLCLSRNIAMVNLQDNLKDFSNLKCLVMKNCENLRYLPSLPKCLEYLNVYGCERLESVENPLVADRLTLFLDRSEELRSTFLFTNCHNLFQDAKDSISTYAKWKCHRLAVECYEQDIVSGAFFNTCYPGYIVPSWFDHQAVGSVLEPRLEPHWYNTMLSGIALCAVVSFHENQDPIIGSFSVKCTLQFENEDGSLRFDCDIGCLNEPGMIEADHVFIGYVTCSRLKDHHSIPIHHPTTVKMQFHLTDACKSKVVDCGFRLMYTQSRGCLLEEEVNANFTKLYLGLL</sequence>
<protein>
    <recommendedName>
        <fullName evidence="8">Disease resistance protein LAZ5</fullName>
        <ecNumber evidence="2">3.2.2.6</ecNumber>
    </recommendedName>
    <alternativeName>
        <fullName evidence="6">Protein LAZARUS 5</fullName>
    </alternativeName>
    <alternativeName>
        <fullName evidence="7">Protein TOLERANCE TO TOBACCO RINGSPOT VIRUS 1</fullName>
    </alternativeName>
</protein>
<feature type="chain" id="PRO_0000433383" description="Disease resistance protein LAZ5">
    <location>
        <begin position="1"/>
        <end position="1170"/>
    </location>
</feature>
<feature type="domain" description="TIR" evidence="2">
    <location>
        <begin position="10"/>
        <end position="172"/>
    </location>
</feature>
<feature type="domain" description="NB-ARC" evidence="1">
    <location>
        <begin position="261"/>
        <end position="513"/>
    </location>
</feature>
<feature type="repeat" description="LRR 1" evidence="1">
    <location>
        <begin position="595"/>
        <end position="616"/>
    </location>
</feature>
<feature type="repeat" description="LRR 2" evidence="1">
    <location>
        <begin position="622"/>
        <end position="645"/>
    </location>
</feature>
<feature type="repeat" description="LRR 3" evidence="1">
    <location>
        <begin position="646"/>
        <end position="670"/>
    </location>
</feature>
<feature type="repeat" description="LRR 4" evidence="1">
    <location>
        <begin position="677"/>
        <end position="700"/>
    </location>
</feature>
<feature type="repeat" description="LRR 5" evidence="1">
    <location>
        <begin position="723"/>
        <end position="747"/>
    </location>
</feature>
<feature type="repeat" description="LRR 6" evidence="1">
    <location>
        <begin position="761"/>
        <end position="785"/>
    </location>
</feature>
<feature type="repeat" description="LRR 7" evidence="1">
    <location>
        <begin position="790"/>
        <end position="813"/>
    </location>
</feature>
<feature type="repeat" description="LRR 8" evidence="1">
    <location>
        <begin position="815"/>
        <end position="837"/>
    </location>
</feature>
<feature type="repeat" description="LRR 9" evidence="1">
    <location>
        <begin position="838"/>
        <end position="861"/>
    </location>
</feature>
<feature type="repeat" description="LRR 10" evidence="1">
    <location>
        <begin position="862"/>
        <end position="885"/>
    </location>
</feature>
<feature type="repeat" description="LRR 11" evidence="1">
    <location>
        <begin position="888"/>
        <end position="904"/>
    </location>
</feature>
<feature type="repeat" description="LRR 12" evidence="1">
    <location>
        <begin position="905"/>
        <end position="930"/>
    </location>
</feature>
<feature type="region of interest" description="Disordered" evidence="3">
    <location>
        <begin position="193"/>
        <end position="219"/>
    </location>
</feature>
<feature type="compositionally biased region" description="Polar residues" evidence="3">
    <location>
        <begin position="198"/>
        <end position="219"/>
    </location>
</feature>
<feature type="active site" evidence="2">
    <location>
        <position position="84"/>
    </location>
</feature>
<feature type="mutagenesis site" description="In laz5-D2; dominant negative mutation responsible for suppression of the acd11-dependent autoimmune response." evidence="4">
    <original>I</original>
    <variation>N</variation>
    <location>
        <position position="287"/>
    </location>
</feature>
<feature type="mutagenesis site" description="In laz5-D3; dominant negative mutation responsible for suppression of the acd11-dependent autoimmune response." evidence="4">
    <original>G</original>
    <variation>E</variation>
    <location>
        <position position="811"/>
    </location>
</feature>
<gene>
    <name evidence="6" type="primary">LAZ5</name>
    <name evidence="7" type="synonym">TTR1</name>
    <name evidence="9" type="ordered locus">At5g44870</name>
    <name evidence="11" type="ORF">K21C13.4</name>
    <name evidence="10" type="ORF">T19K24.2</name>
</gene>
<name>LAZ5_ARATH</name>
<keyword id="KW-0067">ATP-binding</keyword>
<keyword id="KW-0378">Hydrolase</keyword>
<keyword id="KW-0433">Leucine-rich repeat</keyword>
<keyword id="KW-0520">NAD</keyword>
<keyword id="KW-0547">Nucleotide-binding</keyword>
<keyword id="KW-0611">Plant defense</keyword>
<keyword id="KW-1185">Reference proteome</keyword>
<keyword id="KW-0677">Repeat</keyword>
<proteinExistence type="evidence at protein level"/>
<accession>O48573</accession>
<organism>
    <name type="scientific">Arabidopsis thaliana</name>
    <name type="common">Mouse-ear cress</name>
    <dbReference type="NCBI Taxonomy" id="3702"/>
    <lineage>
        <taxon>Eukaryota</taxon>
        <taxon>Viridiplantae</taxon>
        <taxon>Streptophyta</taxon>
        <taxon>Embryophyta</taxon>
        <taxon>Tracheophyta</taxon>
        <taxon>Spermatophyta</taxon>
        <taxon>Magnoliopsida</taxon>
        <taxon>eudicotyledons</taxon>
        <taxon>Gunneridae</taxon>
        <taxon>Pentapetalae</taxon>
        <taxon>rosids</taxon>
        <taxon>malvids</taxon>
        <taxon>Brassicales</taxon>
        <taxon>Brassicaceae</taxon>
        <taxon>Camelineae</taxon>
        <taxon>Arabidopsis</taxon>
    </lineage>
</organism>
<dbReference type="EC" id="3.2.2.6" evidence="2"/>
<dbReference type="EMBL" id="AB010693">
    <property type="protein sequence ID" value="BAB10868.1"/>
    <property type="molecule type" value="Genomic_DNA"/>
</dbReference>
<dbReference type="EMBL" id="AC002342">
    <property type="protein sequence ID" value="AAC79134.1"/>
    <property type="molecule type" value="Genomic_DNA"/>
</dbReference>
<dbReference type="EMBL" id="CP002688">
    <property type="protein sequence ID" value="AED95170.1"/>
    <property type="molecule type" value="Genomic_DNA"/>
</dbReference>
<dbReference type="RefSeq" id="NP_199300.1">
    <property type="nucleotide sequence ID" value="NM_123855.2"/>
</dbReference>
<dbReference type="SMR" id="O48573"/>
<dbReference type="FunCoup" id="O48573">
    <property type="interactions" value="28"/>
</dbReference>
<dbReference type="STRING" id="3702.O48573"/>
<dbReference type="PaxDb" id="3702-AT5G44870.1"/>
<dbReference type="ProteomicsDB" id="250718"/>
<dbReference type="EnsemblPlants" id="AT5G44870.1">
    <property type="protein sequence ID" value="AT5G44870.1"/>
    <property type="gene ID" value="AT5G44870"/>
</dbReference>
<dbReference type="GeneID" id="834517"/>
<dbReference type="Gramene" id="AT5G44870.1">
    <property type="protein sequence ID" value="AT5G44870.1"/>
    <property type="gene ID" value="AT5G44870"/>
</dbReference>
<dbReference type="KEGG" id="ath:AT5G44870"/>
<dbReference type="Araport" id="AT5G44870"/>
<dbReference type="TAIR" id="AT5G44870">
    <property type="gene designation" value="LAZ5"/>
</dbReference>
<dbReference type="eggNOG" id="ENOG502SI7S">
    <property type="taxonomic scope" value="Eukaryota"/>
</dbReference>
<dbReference type="HOGENOM" id="CLU_001561_0_3_1"/>
<dbReference type="InParanoid" id="O48573"/>
<dbReference type="OMA" id="PNIPNWE"/>
<dbReference type="OrthoDB" id="1099686at2759"/>
<dbReference type="PhylomeDB" id="O48573"/>
<dbReference type="PRO" id="PR:O48573"/>
<dbReference type="Proteomes" id="UP000006548">
    <property type="component" value="Chromosome 5"/>
</dbReference>
<dbReference type="ExpressionAtlas" id="O48573">
    <property type="expression patterns" value="baseline and differential"/>
</dbReference>
<dbReference type="GO" id="GO:0043531">
    <property type="term" value="F:ADP binding"/>
    <property type="evidence" value="ECO:0007669"/>
    <property type="project" value="InterPro"/>
</dbReference>
<dbReference type="GO" id="GO:0005524">
    <property type="term" value="F:ATP binding"/>
    <property type="evidence" value="ECO:0007669"/>
    <property type="project" value="UniProtKB-KW"/>
</dbReference>
<dbReference type="GO" id="GO:0061809">
    <property type="term" value="F:NAD+ nucleosidase activity, cyclic ADP-ribose generating"/>
    <property type="evidence" value="ECO:0007669"/>
    <property type="project" value="UniProtKB-EC"/>
</dbReference>
<dbReference type="GO" id="GO:0051607">
    <property type="term" value="P:defense response to virus"/>
    <property type="evidence" value="ECO:0000315"/>
    <property type="project" value="TAIR"/>
</dbReference>
<dbReference type="GO" id="GO:0009626">
    <property type="term" value="P:plant-type hypersensitive response"/>
    <property type="evidence" value="ECO:0000315"/>
    <property type="project" value="TAIR"/>
</dbReference>
<dbReference type="GO" id="GO:0009615">
    <property type="term" value="P:response to virus"/>
    <property type="evidence" value="ECO:0000315"/>
    <property type="project" value="TAIR"/>
</dbReference>
<dbReference type="GO" id="GO:0007165">
    <property type="term" value="P:signal transduction"/>
    <property type="evidence" value="ECO:0007669"/>
    <property type="project" value="InterPro"/>
</dbReference>
<dbReference type="FunFam" id="3.40.50.10140:FF:000007">
    <property type="entry name" value="Disease resistance protein (TIR-NBS-LRR class)"/>
    <property type="match status" value="1"/>
</dbReference>
<dbReference type="FunFam" id="3.40.50.300:FF:001862">
    <property type="entry name" value="Disease resistance protein RPS4"/>
    <property type="match status" value="1"/>
</dbReference>
<dbReference type="FunFam" id="3.80.10.10:FF:000386">
    <property type="entry name" value="Disease resistance protein RPS4"/>
    <property type="match status" value="1"/>
</dbReference>
<dbReference type="Gene3D" id="1.10.8.430">
    <property type="entry name" value="Helical domain of apoptotic protease-activating factors"/>
    <property type="match status" value="1"/>
</dbReference>
<dbReference type="Gene3D" id="3.40.50.300">
    <property type="entry name" value="P-loop containing nucleotide triphosphate hydrolases"/>
    <property type="match status" value="1"/>
</dbReference>
<dbReference type="Gene3D" id="3.80.10.10">
    <property type="entry name" value="Ribonuclease Inhibitor"/>
    <property type="match status" value="2"/>
</dbReference>
<dbReference type="Gene3D" id="3.40.50.10140">
    <property type="entry name" value="Toll/interleukin-1 receptor homology (TIR) domain"/>
    <property type="match status" value="1"/>
</dbReference>
<dbReference type="InterPro" id="IPR042197">
    <property type="entry name" value="Apaf_helical"/>
</dbReference>
<dbReference type="InterPro" id="IPR045344">
    <property type="entry name" value="C-JID"/>
</dbReference>
<dbReference type="InterPro" id="IPR044974">
    <property type="entry name" value="Disease_R_plants"/>
</dbReference>
<dbReference type="InterPro" id="IPR011713">
    <property type="entry name" value="Leu-rich_rpt_3"/>
</dbReference>
<dbReference type="InterPro" id="IPR032675">
    <property type="entry name" value="LRR_dom_sf"/>
</dbReference>
<dbReference type="InterPro" id="IPR002182">
    <property type="entry name" value="NB-ARC"/>
</dbReference>
<dbReference type="InterPro" id="IPR027417">
    <property type="entry name" value="P-loop_NTPase"/>
</dbReference>
<dbReference type="InterPro" id="IPR000157">
    <property type="entry name" value="TIR_dom"/>
</dbReference>
<dbReference type="InterPro" id="IPR035897">
    <property type="entry name" value="Toll_tir_struct_dom_sf"/>
</dbReference>
<dbReference type="PANTHER" id="PTHR11017:SF589">
    <property type="entry name" value="ADP-RIBOSYL CYCLASE_CYCLIC ADP-RIBOSE HYDROLASE-RELATED"/>
    <property type="match status" value="1"/>
</dbReference>
<dbReference type="PANTHER" id="PTHR11017">
    <property type="entry name" value="LEUCINE-RICH REPEAT-CONTAINING PROTEIN"/>
    <property type="match status" value="1"/>
</dbReference>
<dbReference type="Pfam" id="PF20160">
    <property type="entry name" value="C-JID"/>
    <property type="match status" value="1"/>
</dbReference>
<dbReference type="Pfam" id="PF07725">
    <property type="entry name" value="LRR_3"/>
    <property type="match status" value="1"/>
</dbReference>
<dbReference type="Pfam" id="PF00931">
    <property type="entry name" value="NB-ARC"/>
    <property type="match status" value="1"/>
</dbReference>
<dbReference type="Pfam" id="PF01582">
    <property type="entry name" value="TIR"/>
    <property type="match status" value="1"/>
</dbReference>
<dbReference type="Pfam" id="PF23282">
    <property type="entry name" value="WHD_ROQ1"/>
    <property type="match status" value="1"/>
</dbReference>
<dbReference type="PRINTS" id="PR00364">
    <property type="entry name" value="DISEASERSIST"/>
</dbReference>
<dbReference type="SMART" id="SM00255">
    <property type="entry name" value="TIR"/>
    <property type="match status" value="1"/>
</dbReference>
<dbReference type="SUPFAM" id="SSF52058">
    <property type="entry name" value="L domain-like"/>
    <property type="match status" value="1"/>
</dbReference>
<dbReference type="SUPFAM" id="SSF52540">
    <property type="entry name" value="P-loop containing nucleoside triphosphate hydrolases"/>
    <property type="match status" value="1"/>
</dbReference>
<dbReference type="SUPFAM" id="SSF52200">
    <property type="entry name" value="Toll/Interleukin receptor TIR domain"/>
    <property type="match status" value="1"/>
</dbReference>
<dbReference type="PROSITE" id="PS50104">
    <property type="entry name" value="TIR"/>
    <property type="match status" value="1"/>
</dbReference>
<reference key="1">
    <citation type="journal article" date="1998" name="DNA Res.">
        <title>Structural analysis of Arabidopsis thaliana chromosome 5. V. Sequence features of the regions of 1,381,565 bp covered by twenty one physically assigned P1 and TAC clones.</title>
        <authorList>
            <person name="Kaneko T."/>
            <person name="Kotani H."/>
            <person name="Nakamura Y."/>
            <person name="Sato S."/>
            <person name="Asamizu E."/>
            <person name="Miyajima N."/>
            <person name="Tabata S."/>
        </authorList>
    </citation>
    <scope>NUCLEOTIDE SEQUENCE [LARGE SCALE GENOMIC DNA]</scope>
    <source>
        <strain>cv. Columbia</strain>
    </source>
</reference>
<reference key="2">
    <citation type="journal article" date="2000" name="Nature">
        <title>Sequence and analysis of chromosome 5 of the plant Arabidopsis thaliana.</title>
        <authorList>
            <person name="Tabata S."/>
            <person name="Kaneko T."/>
            <person name="Nakamura Y."/>
            <person name="Kotani H."/>
            <person name="Kato T."/>
            <person name="Asamizu E."/>
            <person name="Miyajima N."/>
            <person name="Sasamoto S."/>
            <person name="Kimura T."/>
            <person name="Hosouchi T."/>
            <person name="Kawashima K."/>
            <person name="Kohara M."/>
            <person name="Matsumoto M."/>
            <person name="Matsuno A."/>
            <person name="Muraki A."/>
            <person name="Nakayama S."/>
            <person name="Nakazaki N."/>
            <person name="Naruo K."/>
            <person name="Okumura S."/>
            <person name="Shinpo S."/>
            <person name="Takeuchi C."/>
            <person name="Wada T."/>
            <person name="Watanabe A."/>
            <person name="Yamada M."/>
            <person name="Yasuda M."/>
            <person name="Sato S."/>
            <person name="de la Bastide M."/>
            <person name="Huang E."/>
            <person name="Spiegel L."/>
            <person name="Gnoj L."/>
            <person name="O'Shaughnessy A."/>
            <person name="Preston R."/>
            <person name="Habermann K."/>
            <person name="Murray J."/>
            <person name="Johnson D."/>
            <person name="Rohlfing T."/>
            <person name="Nelson J."/>
            <person name="Stoneking T."/>
            <person name="Pepin K."/>
            <person name="Spieth J."/>
            <person name="Sekhon M."/>
            <person name="Armstrong J."/>
            <person name="Becker M."/>
            <person name="Belter E."/>
            <person name="Cordum H."/>
            <person name="Cordes M."/>
            <person name="Courtney L."/>
            <person name="Courtney W."/>
            <person name="Dante M."/>
            <person name="Du H."/>
            <person name="Edwards J."/>
            <person name="Fryman J."/>
            <person name="Haakensen B."/>
            <person name="Lamar E."/>
            <person name="Latreille P."/>
            <person name="Leonard S."/>
            <person name="Meyer R."/>
            <person name="Mulvaney E."/>
            <person name="Ozersky P."/>
            <person name="Riley A."/>
            <person name="Strowmatt C."/>
            <person name="Wagner-McPherson C."/>
            <person name="Wollam A."/>
            <person name="Yoakum M."/>
            <person name="Bell M."/>
            <person name="Dedhia N."/>
            <person name="Parnell L."/>
            <person name="Shah R."/>
            <person name="Rodriguez M."/>
            <person name="Hoon See L."/>
            <person name="Vil D."/>
            <person name="Baker J."/>
            <person name="Kirchoff K."/>
            <person name="Toth K."/>
            <person name="King L."/>
            <person name="Bahret A."/>
            <person name="Miller B."/>
            <person name="Marra M.A."/>
            <person name="Martienssen R."/>
            <person name="McCombie W.R."/>
            <person name="Wilson R.K."/>
            <person name="Murphy G."/>
            <person name="Bancroft I."/>
            <person name="Volckaert G."/>
            <person name="Wambutt R."/>
            <person name="Duesterhoeft A."/>
            <person name="Stiekema W."/>
            <person name="Pohl T."/>
            <person name="Entian K.-D."/>
            <person name="Terryn N."/>
            <person name="Hartley N."/>
            <person name="Bent E."/>
            <person name="Johnson S."/>
            <person name="Langham S.-A."/>
            <person name="McCullagh B."/>
            <person name="Robben J."/>
            <person name="Grymonprez B."/>
            <person name="Zimmermann W."/>
            <person name="Ramsperger U."/>
            <person name="Wedler H."/>
            <person name="Balke K."/>
            <person name="Wedler E."/>
            <person name="Peters S."/>
            <person name="van Staveren M."/>
            <person name="Dirkse W."/>
            <person name="Mooijman P."/>
            <person name="Klein Lankhorst R."/>
            <person name="Weitzenegger T."/>
            <person name="Bothe G."/>
            <person name="Rose M."/>
            <person name="Hauf J."/>
            <person name="Berneiser S."/>
            <person name="Hempel S."/>
            <person name="Feldpausch M."/>
            <person name="Lamberth S."/>
            <person name="Villarroel R."/>
            <person name="Gielen J."/>
            <person name="Ardiles W."/>
            <person name="Bents O."/>
            <person name="Lemcke K."/>
            <person name="Kolesov G."/>
            <person name="Mayer K.F.X."/>
            <person name="Rudd S."/>
            <person name="Schoof H."/>
            <person name="Schueller C."/>
            <person name="Zaccaria P."/>
            <person name="Mewes H.-W."/>
            <person name="Bevan M."/>
            <person name="Fransz P.F."/>
        </authorList>
    </citation>
    <scope>NUCLEOTIDE SEQUENCE [LARGE SCALE GENOMIC DNA]</scope>
    <source>
        <strain>cv. Columbia</strain>
    </source>
</reference>
<reference key="3">
    <citation type="journal article" date="2017" name="Plant J.">
        <title>Araport11: a complete reannotation of the Arabidopsis thaliana reference genome.</title>
        <authorList>
            <person name="Cheng C.Y."/>
            <person name="Krishnakumar V."/>
            <person name="Chan A.P."/>
            <person name="Thibaud-Nissen F."/>
            <person name="Schobel S."/>
            <person name="Town C.D."/>
        </authorList>
    </citation>
    <scope>GENOME REANNOTATION</scope>
    <source>
        <strain>cv. Columbia</strain>
    </source>
</reference>
<reference key="4">
    <citation type="journal article" date="2010" name="PLoS Pathog.">
        <title>Autoimmunity in Arabidopsis acd11 is mediated by epigenetic regulation of an immune receptor.</title>
        <authorList>
            <person name="Palma K."/>
            <person name="Thorgrimsen S."/>
            <person name="Malinovsky F.G."/>
            <person name="Fiil B.K."/>
            <person name="Nielsen H.B."/>
            <person name="Brodersen P."/>
            <person name="Hofius D."/>
            <person name="Petersen M."/>
            <person name="Mundy J."/>
        </authorList>
    </citation>
    <scope>FUNCTION</scope>
    <scope>INDUCTION</scope>
    <scope>MUTAGENESIS OF ILE-287 AND GLY-811</scope>
</reference>
<reference key="5">
    <citation type="journal article" date="2011" name="Mol. Cells">
        <title>Arabidopsis TTR1 causes LRR-dependent lethal systemic necrosis, rather than systemic acquired resistance, to Tobacco ringspot virus.</title>
        <authorList>
            <person name="Nam M."/>
            <person name="Koh S."/>
            <person name="Kim S.U."/>
            <person name="Domier L.L."/>
            <person name="Jeon J.H."/>
            <person name="Kim H.G."/>
            <person name="Lee S.H."/>
            <person name="Bent A.F."/>
            <person name="Moon J.S."/>
        </authorList>
    </citation>
    <scope>FUNCTION</scope>
    <source>
        <strain>cv. Est</strain>
    </source>
</reference>
<comment type="function">
    <text evidence="4 5">TIR-NB-LRR receptor-like protein that may play a role in plant innate immunity. May trigger hypersensitive programmed cell death in response to pathogen attack (PubMed:20949080). Involved in tolerance to tobacco ringspot virus (TRSV) (PubMed:22057987).</text>
</comment>
<comment type="catalytic activity">
    <reaction evidence="2">
        <text>NAD(+) + H2O = ADP-D-ribose + nicotinamide + H(+)</text>
        <dbReference type="Rhea" id="RHEA:16301"/>
        <dbReference type="ChEBI" id="CHEBI:15377"/>
        <dbReference type="ChEBI" id="CHEBI:15378"/>
        <dbReference type="ChEBI" id="CHEBI:17154"/>
        <dbReference type="ChEBI" id="CHEBI:57540"/>
        <dbReference type="ChEBI" id="CHEBI:57967"/>
        <dbReference type="EC" id="3.2.2.6"/>
    </reaction>
    <physiologicalReaction direction="left-to-right" evidence="2">
        <dbReference type="Rhea" id="RHEA:16302"/>
    </physiologicalReaction>
</comment>
<comment type="induction">
    <text evidence="4">Up-regulated by ASHH2 via epigenetic chromatin H3K36me3 regulation during the vegetative development.</text>
</comment>
<comment type="domain">
    <text evidence="2">The TIR domain mediates NAD(+) hydrolase (NADase) activity. Self-association of TIR domains is required for NADase activity.</text>
</comment>
<comment type="miscellaneous">
    <text evidence="4 5">Plants over-expressing LAZ5 exhibit hypersensitive cell death and do not survive (PubMed:20949080). In the ecotype Estland (Est), which shows a sensitive response upon tobacco ringspot virus (TRSV) inoculation, the TTR1 allele is involved in the development of lethal systemic necrosis in response to TRSV (PubMed:22057987).</text>
</comment>
<evidence type="ECO:0000255" key="1"/>
<evidence type="ECO:0000255" key="2">
    <source>
        <dbReference type="PROSITE-ProRule" id="PRU00204"/>
    </source>
</evidence>
<evidence type="ECO:0000256" key="3">
    <source>
        <dbReference type="SAM" id="MobiDB-lite"/>
    </source>
</evidence>
<evidence type="ECO:0000269" key="4">
    <source>
    </source>
</evidence>
<evidence type="ECO:0000269" key="5">
    <source>
    </source>
</evidence>
<evidence type="ECO:0000303" key="6">
    <source>
    </source>
</evidence>
<evidence type="ECO:0000303" key="7">
    <source>
    </source>
</evidence>
<evidence type="ECO:0000305" key="8"/>
<evidence type="ECO:0000312" key="9">
    <source>
        <dbReference type="Araport" id="AT5G44870"/>
    </source>
</evidence>
<evidence type="ECO:0000312" key="10">
    <source>
        <dbReference type="EMBL" id="AAC79134.1"/>
    </source>
</evidence>
<evidence type="ECO:0000312" key="11">
    <source>
        <dbReference type="EMBL" id="BAB10868.1"/>
    </source>
</evidence>